<name>RL34_RALN1</name>
<organism>
    <name type="scientific">Ralstonia nicotianae (strain ATCC BAA-1114 / GMI1000)</name>
    <name type="common">Ralstonia solanacearum</name>
    <dbReference type="NCBI Taxonomy" id="267608"/>
    <lineage>
        <taxon>Bacteria</taxon>
        <taxon>Pseudomonadati</taxon>
        <taxon>Pseudomonadota</taxon>
        <taxon>Betaproteobacteria</taxon>
        <taxon>Burkholderiales</taxon>
        <taxon>Burkholderiaceae</taxon>
        <taxon>Ralstonia</taxon>
        <taxon>Ralstonia solanacearum species complex</taxon>
    </lineage>
</organism>
<evidence type="ECO:0000255" key="1">
    <source>
        <dbReference type="HAMAP-Rule" id="MF_00391"/>
    </source>
</evidence>
<evidence type="ECO:0000305" key="2"/>
<keyword id="KW-1185">Reference proteome</keyword>
<keyword id="KW-0687">Ribonucleoprotein</keyword>
<keyword id="KW-0689">Ribosomal protein</keyword>
<protein>
    <recommendedName>
        <fullName evidence="1">Large ribosomal subunit protein bL34</fullName>
    </recommendedName>
    <alternativeName>
        <fullName evidence="2">50S ribosomal protein L34</fullName>
    </alternativeName>
</protein>
<sequence>MKRTYQPSVTRRKRTHGFRVRMKTRGGRAVLNARRAKGRKRLAI</sequence>
<dbReference type="EMBL" id="AL646052">
    <property type="protein sequence ID" value="CAD13529.1"/>
    <property type="molecule type" value="Genomic_DNA"/>
</dbReference>
<dbReference type="RefSeq" id="WP_003262958.1">
    <property type="nucleotide sequence ID" value="NC_003295.1"/>
</dbReference>
<dbReference type="SMR" id="Q8Y3H9"/>
<dbReference type="STRING" id="267608.RSc0001"/>
<dbReference type="EnsemblBacteria" id="CAD13529">
    <property type="protein sequence ID" value="CAD13529"/>
    <property type="gene ID" value="RSc0001"/>
</dbReference>
<dbReference type="GeneID" id="97322746"/>
<dbReference type="KEGG" id="rso:RSc0001"/>
<dbReference type="eggNOG" id="COG0230">
    <property type="taxonomic scope" value="Bacteria"/>
</dbReference>
<dbReference type="HOGENOM" id="CLU_129938_2_0_4"/>
<dbReference type="Proteomes" id="UP000001436">
    <property type="component" value="Chromosome"/>
</dbReference>
<dbReference type="GO" id="GO:1990904">
    <property type="term" value="C:ribonucleoprotein complex"/>
    <property type="evidence" value="ECO:0007669"/>
    <property type="project" value="UniProtKB-KW"/>
</dbReference>
<dbReference type="GO" id="GO:0005840">
    <property type="term" value="C:ribosome"/>
    <property type="evidence" value="ECO:0007669"/>
    <property type="project" value="UniProtKB-KW"/>
</dbReference>
<dbReference type="GO" id="GO:0003735">
    <property type="term" value="F:structural constituent of ribosome"/>
    <property type="evidence" value="ECO:0007669"/>
    <property type="project" value="InterPro"/>
</dbReference>
<dbReference type="GO" id="GO:0006412">
    <property type="term" value="P:translation"/>
    <property type="evidence" value="ECO:0007669"/>
    <property type="project" value="UniProtKB-UniRule"/>
</dbReference>
<dbReference type="FunFam" id="1.10.287.3980:FF:000001">
    <property type="entry name" value="Mitochondrial ribosomal protein L34"/>
    <property type="match status" value="1"/>
</dbReference>
<dbReference type="Gene3D" id="1.10.287.3980">
    <property type="match status" value="1"/>
</dbReference>
<dbReference type="HAMAP" id="MF_00391">
    <property type="entry name" value="Ribosomal_bL34"/>
    <property type="match status" value="1"/>
</dbReference>
<dbReference type="InterPro" id="IPR000271">
    <property type="entry name" value="Ribosomal_bL34"/>
</dbReference>
<dbReference type="InterPro" id="IPR020939">
    <property type="entry name" value="Ribosomal_bL34_CS"/>
</dbReference>
<dbReference type="NCBIfam" id="TIGR01030">
    <property type="entry name" value="rpmH_bact"/>
    <property type="match status" value="1"/>
</dbReference>
<dbReference type="PANTHER" id="PTHR14503:SF4">
    <property type="entry name" value="LARGE RIBOSOMAL SUBUNIT PROTEIN BL34M"/>
    <property type="match status" value="1"/>
</dbReference>
<dbReference type="PANTHER" id="PTHR14503">
    <property type="entry name" value="MITOCHONDRIAL RIBOSOMAL PROTEIN 34 FAMILY MEMBER"/>
    <property type="match status" value="1"/>
</dbReference>
<dbReference type="Pfam" id="PF00468">
    <property type="entry name" value="Ribosomal_L34"/>
    <property type="match status" value="1"/>
</dbReference>
<dbReference type="PROSITE" id="PS00784">
    <property type="entry name" value="RIBOSOMAL_L34"/>
    <property type="match status" value="1"/>
</dbReference>
<comment type="similarity">
    <text evidence="1">Belongs to the bacterial ribosomal protein bL34 family.</text>
</comment>
<accession>Q8Y3H9</accession>
<reference key="1">
    <citation type="journal article" date="2002" name="Nature">
        <title>Genome sequence of the plant pathogen Ralstonia solanacearum.</title>
        <authorList>
            <person name="Salanoubat M."/>
            <person name="Genin S."/>
            <person name="Artiguenave F."/>
            <person name="Gouzy J."/>
            <person name="Mangenot S."/>
            <person name="Arlat M."/>
            <person name="Billault A."/>
            <person name="Brottier P."/>
            <person name="Camus J.-C."/>
            <person name="Cattolico L."/>
            <person name="Chandler M."/>
            <person name="Choisne N."/>
            <person name="Claudel-Renard C."/>
            <person name="Cunnac S."/>
            <person name="Demange N."/>
            <person name="Gaspin C."/>
            <person name="Lavie M."/>
            <person name="Moisan A."/>
            <person name="Robert C."/>
            <person name="Saurin W."/>
            <person name="Schiex T."/>
            <person name="Siguier P."/>
            <person name="Thebault P."/>
            <person name="Whalen M."/>
            <person name="Wincker P."/>
            <person name="Levy M."/>
            <person name="Weissenbach J."/>
            <person name="Boucher C.A."/>
        </authorList>
    </citation>
    <scope>NUCLEOTIDE SEQUENCE [LARGE SCALE GENOMIC DNA]</scope>
    <source>
        <strain>ATCC BAA-1114 / GMI1000</strain>
    </source>
</reference>
<gene>
    <name evidence="1" type="primary">rpmH</name>
    <name type="ordered locus">RSc0001</name>
    <name type="ORF">RS01885</name>
</gene>
<proteinExistence type="inferred from homology"/>
<feature type="chain" id="PRO_0000187446" description="Large ribosomal subunit protein bL34">
    <location>
        <begin position="1"/>
        <end position="44"/>
    </location>
</feature>